<proteinExistence type="evidence at transcript level"/>
<evidence type="ECO:0000250" key="1">
    <source>
        <dbReference type="UniProtKB" id="Q7T292"/>
    </source>
</evidence>
<evidence type="ECO:0000250" key="2">
    <source>
        <dbReference type="UniProtKB" id="Q96A46"/>
    </source>
</evidence>
<evidence type="ECO:0000255" key="3"/>
<evidence type="ECO:0000305" key="4"/>
<organism>
    <name type="scientific">Xenopus laevis</name>
    <name type="common">African clawed frog</name>
    <dbReference type="NCBI Taxonomy" id="8355"/>
    <lineage>
        <taxon>Eukaryota</taxon>
        <taxon>Metazoa</taxon>
        <taxon>Chordata</taxon>
        <taxon>Craniata</taxon>
        <taxon>Vertebrata</taxon>
        <taxon>Euteleostomi</taxon>
        <taxon>Amphibia</taxon>
        <taxon>Batrachia</taxon>
        <taxon>Anura</taxon>
        <taxon>Pipoidea</taxon>
        <taxon>Pipidae</taxon>
        <taxon>Xenopodinae</taxon>
        <taxon>Xenopus</taxon>
        <taxon>Xenopus</taxon>
    </lineage>
</organism>
<reference key="1">
    <citation type="submission" date="2004-08" db="EMBL/GenBank/DDBJ databases">
        <authorList>
            <consortium name="NIH - Xenopus Gene Collection (XGC) project"/>
        </authorList>
    </citation>
    <scope>NUCLEOTIDE SEQUENCE [LARGE SCALE MRNA]</scope>
    <source>
        <tissue>Spleen</tissue>
    </source>
</reference>
<name>MFN2B_XENLA</name>
<gene>
    <name type="primary">slc25a28-b</name>
    <name type="synonym">mfrn2-b</name>
</gene>
<accession>Q68F18</accession>
<feature type="chain" id="PRO_0000235259" description="Mitoferrin-2B">
    <location>
        <begin position="1"/>
        <end position="186"/>
    </location>
</feature>
<feature type="transmembrane region" description="Helical; Name=1" evidence="3">
    <location>
        <begin position="77"/>
        <end position="96"/>
    </location>
</feature>
<feature type="transmembrane region" description="Helical; Name=2" evidence="3">
    <location>
        <begin position="137"/>
        <end position="157"/>
    </location>
</feature>
<feature type="transmembrane region" description="Helical; Name=3" evidence="3">
    <location>
        <begin position="172"/>
        <end position="185"/>
    </location>
</feature>
<feature type="repeat" description="Solcar">
    <location>
        <begin position="75"/>
        <end position="163"/>
    </location>
</feature>
<comment type="function">
    <text evidence="1">Mitochondrial iron transporter that mediates iron uptake. Probably required for heme synthesis of hemoproteins and Fe-S cluster assembly in non-erythroid cells.</text>
</comment>
<comment type="catalytic activity">
    <reaction evidence="1">
        <text>Fe(2+)(in) = Fe(2+)(out)</text>
        <dbReference type="Rhea" id="RHEA:28486"/>
        <dbReference type="ChEBI" id="CHEBI:29033"/>
    </reaction>
</comment>
<comment type="subcellular location">
    <subcellularLocation>
        <location evidence="2">Mitochondrion inner membrane</location>
        <topology evidence="3">Multi-pass membrane protein</topology>
    </subcellularLocation>
</comment>
<comment type="similarity">
    <text evidence="4">Belongs to the mitochondrial carrier (TC 2.A.29) family.</text>
</comment>
<sequence>MELEAVLKERTAAAGDPGRVLGAWVRRGWATAGPGVLESDGGSGGTLAFESTSSSRILELTSDNDPEYEALPEGSNVTAHMLAGAVAGVMEHCLMYPVDCVKTRMQSLQPDPAARYRNVMDALSKIVRTEGFWRPLRGLNVTATGAGPAHALYFACYEKLKKTLSDIIHPGGNCHVANGIDNSCPA</sequence>
<dbReference type="EMBL" id="BC080028">
    <property type="protein sequence ID" value="AAH80028.1"/>
    <property type="molecule type" value="mRNA"/>
</dbReference>
<dbReference type="RefSeq" id="NP_001087506.1">
    <property type="nucleotide sequence ID" value="NM_001094037.1"/>
</dbReference>
<dbReference type="SMR" id="Q68F18"/>
<dbReference type="DNASU" id="447330"/>
<dbReference type="GeneID" id="447330"/>
<dbReference type="KEGG" id="xla:447330"/>
<dbReference type="AGR" id="Xenbase:XB-GENE-6254008"/>
<dbReference type="CTD" id="447330"/>
<dbReference type="Xenbase" id="XB-GENE-6254008">
    <property type="gene designation" value="slc25a28.L"/>
</dbReference>
<dbReference type="OrthoDB" id="43906at2759"/>
<dbReference type="Proteomes" id="UP000186698">
    <property type="component" value="Chromosome 7L"/>
</dbReference>
<dbReference type="Bgee" id="447330">
    <property type="expression patterns" value="Expressed in zone of skin and 19 other cell types or tissues"/>
</dbReference>
<dbReference type="GO" id="GO:0005743">
    <property type="term" value="C:mitochondrial inner membrane"/>
    <property type="evidence" value="ECO:0007669"/>
    <property type="project" value="UniProtKB-SubCell"/>
</dbReference>
<dbReference type="GO" id="GO:0015093">
    <property type="term" value="F:ferrous iron transmembrane transporter activity"/>
    <property type="evidence" value="ECO:0007669"/>
    <property type="project" value="TreeGrafter"/>
</dbReference>
<dbReference type="GO" id="GO:0048250">
    <property type="term" value="P:iron import into the mitochondrion"/>
    <property type="evidence" value="ECO:0007669"/>
    <property type="project" value="TreeGrafter"/>
</dbReference>
<dbReference type="Gene3D" id="1.50.40.10">
    <property type="entry name" value="Mitochondrial carrier domain"/>
    <property type="match status" value="1"/>
</dbReference>
<dbReference type="InterPro" id="IPR018108">
    <property type="entry name" value="Mitochondrial_sb/sol_carrier"/>
</dbReference>
<dbReference type="InterPro" id="IPR023395">
    <property type="entry name" value="Mt_carrier_dom_sf"/>
</dbReference>
<dbReference type="PANTHER" id="PTHR45758">
    <property type="entry name" value="MITOFERRIN-1-RELATED"/>
    <property type="match status" value="1"/>
</dbReference>
<dbReference type="PANTHER" id="PTHR45758:SF20">
    <property type="entry name" value="MITOFERRIN-2"/>
    <property type="match status" value="1"/>
</dbReference>
<dbReference type="Pfam" id="PF00153">
    <property type="entry name" value="Mito_carr"/>
    <property type="match status" value="1"/>
</dbReference>
<dbReference type="SUPFAM" id="SSF103506">
    <property type="entry name" value="Mitochondrial carrier"/>
    <property type="match status" value="1"/>
</dbReference>
<dbReference type="PROSITE" id="PS50920">
    <property type="entry name" value="SOLCAR"/>
    <property type="match status" value="1"/>
</dbReference>
<keyword id="KW-0406">Ion transport</keyword>
<keyword id="KW-0408">Iron</keyword>
<keyword id="KW-0410">Iron transport</keyword>
<keyword id="KW-0472">Membrane</keyword>
<keyword id="KW-0496">Mitochondrion</keyword>
<keyword id="KW-0999">Mitochondrion inner membrane</keyword>
<keyword id="KW-1185">Reference proteome</keyword>
<keyword id="KW-0812">Transmembrane</keyword>
<keyword id="KW-1133">Transmembrane helix</keyword>
<keyword id="KW-0813">Transport</keyword>
<protein>
    <recommendedName>
        <fullName>Mitoferrin-2B</fullName>
    </recommendedName>
    <alternativeName>
        <fullName>Mitochondrial iron transporter 2-B</fullName>
    </alternativeName>
    <alternativeName>
        <fullName>Solute carrier family 25 member 28-B</fullName>
    </alternativeName>
</protein>